<accession>Q8BSY0</accession>
<accession>Q6P8S1</accession>
<accession>Q9EPA6</accession>
<accession>Q9EQ64</accession>
<gene>
    <name type="primary">Asph</name>
    <name type="synonym">Bah</name>
</gene>
<dbReference type="EC" id="1.14.11.16" evidence="6"/>
<dbReference type="EMBL" id="AF221854">
    <property type="protein sequence ID" value="AAK00614.1"/>
    <property type="molecule type" value="mRNA"/>
</dbReference>
<dbReference type="EMBL" id="AF289486">
    <property type="protein sequence ID" value="AAG40808.1"/>
    <property type="molecule type" value="mRNA"/>
</dbReference>
<dbReference type="EMBL" id="AF289487">
    <property type="protein sequence ID" value="AAG40809.1"/>
    <property type="molecule type" value="mRNA"/>
</dbReference>
<dbReference type="EMBL" id="AF289490">
    <property type="protein sequence ID" value="AAG40812.1"/>
    <property type="molecule type" value="mRNA"/>
</dbReference>
<dbReference type="EMBL" id="AF223413">
    <property type="protein sequence ID" value="AAN87549.1"/>
    <property type="molecule type" value="mRNA"/>
</dbReference>
<dbReference type="EMBL" id="AK030293">
    <property type="protein sequence ID" value="BAC26882.1"/>
    <property type="molecule type" value="mRNA"/>
</dbReference>
<dbReference type="EMBL" id="AL671970">
    <property type="status" value="NOT_ANNOTATED_CDS"/>
    <property type="molecule type" value="Genomic_DNA"/>
</dbReference>
<dbReference type="EMBL" id="AL732508">
    <property type="status" value="NOT_ANNOTATED_CDS"/>
    <property type="molecule type" value="Genomic_DNA"/>
</dbReference>
<dbReference type="EMBL" id="AL773548">
    <property type="status" value="NOT_ANNOTATED_CDS"/>
    <property type="molecule type" value="Genomic_DNA"/>
</dbReference>
<dbReference type="EMBL" id="BC061098">
    <property type="protein sequence ID" value="AAH61098.1"/>
    <property type="molecule type" value="mRNA"/>
</dbReference>
<dbReference type="EMBL" id="BC128299">
    <property type="protein sequence ID" value="AAI28300.1"/>
    <property type="molecule type" value="mRNA"/>
</dbReference>
<dbReference type="EMBL" id="BC152365">
    <property type="protein sequence ID" value="AAI52366.1"/>
    <property type="molecule type" value="mRNA"/>
</dbReference>
<dbReference type="CCDS" id="CCDS17959.1">
    <molecule id="Q8BSY0-2"/>
</dbReference>
<dbReference type="CCDS" id="CCDS38690.1">
    <molecule id="Q8BSY0-1"/>
</dbReference>
<dbReference type="CCDS" id="CCDS51118.1">
    <molecule id="Q8BSY0-3"/>
</dbReference>
<dbReference type="RefSeq" id="NP_001171321.1">
    <property type="nucleotide sequence ID" value="NM_001177850.1"/>
</dbReference>
<dbReference type="RefSeq" id="NP_001171323.1">
    <property type="nucleotide sequence ID" value="NM_001177852.1"/>
</dbReference>
<dbReference type="RefSeq" id="NP_001171324.1">
    <property type="nucleotide sequence ID" value="NM_001177853.1"/>
</dbReference>
<dbReference type="RefSeq" id="NP_001171325.1">
    <property type="nucleotide sequence ID" value="NM_001177854.1"/>
</dbReference>
<dbReference type="RefSeq" id="NP_001171326.1">
    <property type="nucleotide sequence ID" value="NM_001177855.1"/>
</dbReference>
<dbReference type="RefSeq" id="NP_001171327.1">
    <molecule id="Q8BSY0-3"/>
    <property type="nucleotide sequence ID" value="NM_001177856.1"/>
</dbReference>
<dbReference type="RefSeq" id="NP_001277296.1">
    <property type="nucleotide sequence ID" value="NM_001290367.1"/>
</dbReference>
<dbReference type="RefSeq" id="NP_075553.2">
    <molecule id="Q8BSY0-1"/>
    <property type="nucleotide sequence ID" value="NM_023066.3"/>
</dbReference>
<dbReference type="SMR" id="Q8BSY0"/>
<dbReference type="BioGRID" id="211167">
    <property type="interactions" value="12"/>
</dbReference>
<dbReference type="FunCoup" id="Q8BSY0">
    <property type="interactions" value="2080"/>
</dbReference>
<dbReference type="IntAct" id="Q8BSY0">
    <property type="interactions" value="5"/>
</dbReference>
<dbReference type="STRING" id="10090.ENSMUSP00000077273"/>
<dbReference type="GlyConnect" id="2136">
    <molecule id="Q8BSY0-3"/>
    <property type="glycosylation" value="6 N-Linked glycans (2 sites)"/>
</dbReference>
<dbReference type="GlyCosmos" id="Q8BSY0">
    <property type="glycosylation" value="3 sites, 1 glycan"/>
</dbReference>
<dbReference type="GlyGen" id="Q8BSY0">
    <property type="glycosylation" value="5 sites, 5 N-linked glycans (4 sites), 1 O-linked glycan (1 site)"/>
</dbReference>
<dbReference type="iPTMnet" id="Q8BSY0"/>
<dbReference type="PhosphoSitePlus" id="Q8BSY0"/>
<dbReference type="SwissPalm" id="Q8BSY0"/>
<dbReference type="jPOST" id="Q8BSY0"/>
<dbReference type="PaxDb" id="10090-ENSMUSP00000077273"/>
<dbReference type="ProteomicsDB" id="283188">
    <molecule id="Q8BSY0-1"/>
</dbReference>
<dbReference type="ProteomicsDB" id="283189">
    <molecule id="Q8BSY0-2"/>
</dbReference>
<dbReference type="ProteomicsDB" id="308643"/>
<dbReference type="Pumba" id="Q8BSY0"/>
<dbReference type="Antibodypedia" id="24707">
    <property type="antibodies" value="329 antibodies from 31 providers"/>
</dbReference>
<dbReference type="DNASU" id="65973"/>
<dbReference type="Ensembl" id="ENSMUST00000078139.13">
    <molecule id="Q8BSY0-1"/>
    <property type="protein sequence ID" value="ENSMUSP00000077273.7"/>
    <property type="gene ID" value="ENSMUSG00000028207.19"/>
</dbReference>
<dbReference type="Ensembl" id="ENSMUST00000146441.8">
    <molecule id="Q8BSY0-3"/>
    <property type="protein sequence ID" value="ENSMUSP00000116899.2"/>
    <property type="gene ID" value="ENSMUSG00000028207.19"/>
</dbReference>
<dbReference type="GeneID" id="65973"/>
<dbReference type="KEGG" id="mmu:65973"/>
<dbReference type="UCSC" id="uc008ryf.2">
    <molecule id="Q8BSY0-1"/>
    <property type="organism name" value="mouse"/>
</dbReference>
<dbReference type="UCSC" id="uc008ryo.3">
    <property type="organism name" value="mouse"/>
</dbReference>
<dbReference type="AGR" id="MGI:1914186"/>
<dbReference type="CTD" id="444"/>
<dbReference type="MGI" id="MGI:1914186">
    <property type="gene designation" value="Asph"/>
</dbReference>
<dbReference type="VEuPathDB" id="HostDB:ENSMUSG00000028207"/>
<dbReference type="eggNOG" id="KOG3696">
    <property type="taxonomic scope" value="Eukaryota"/>
</dbReference>
<dbReference type="GeneTree" id="ENSGT00940000156304"/>
<dbReference type="HOGENOM" id="CLU_106984_2_0_1"/>
<dbReference type="InParanoid" id="Q8BSY0"/>
<dbReference type="OMA" id="YTELVKX"/>
<dbReference type="OrthoDB" id="438431at2759"/>
<dbReference type="PhylomeDB" id="Q8BSY0"/>
<dbReference type="TreeFam" id="TF312799"/>
<dbReference type="Reactome" id="R-MMU-2672351">
    <property type="pathway name" value="Stimuli-sensing channels"/>
</dbReference>
<dbReference type="Reactome" id="R-MMU-5578775">
    <property type="pathway name" value="Ion homeostasis"/>
</dbReference>
<dbReference type="BioGRID-ORCS" id="65973">
    <property type="hits" value="3 hits in 77 CRISPR screens"/>
</dbReference>
<dbReference type="ChiTaRS" id="Asph">
    <property type="organism name" value="mouse"/>
</dbReference>
<dbReference type="PRO" id="PR:Q8BSY0"/>
<dbReference type="Proteomes" id="UP000000589">
    <property type="component" value="Chromosome 4"/>
</dbReference>
<dbReference type="RNAct" id="Q8BSY0">
    <property type="molecule type" value="protein"/>
</dbReference>
<dbReference type="Bgee" id="ENSMUSG00000028207">
    <property type="expression patterns" value="Expressed in vastus lateralis and 251 other cell types or tissues"/>
</dbReference>
<dbReference type="ExpressionAtlas" id="Q8BSY0">
    <property type="expression patterns" value="baseline and differential"/>
</dbReference>
<dbReference type="GO" id="GO:0032541">
    <property type="term" value="C:cortical endoplasmic reticulum"/>
    <property type="evidence" value="ECO:0007669"/>
    <property type="project" value="Ensembl"/>
</dbReference>
<dbReference type="GO" id="GO:0005737">
    <property type="term" value="C:cytoplasm"/>
    <property type="evidence" value="ECO:0000314"/>
    <property type="project" value="BHF-UCL"/>
</dbReference>
<dbReference type="GO" id="GO:0016020">
    <property type="term" value="C:membrane"/>
    <property type="evidence" value="ECO:0000250"/>
    <property type="project" value="MGI"/>
</dbReference>
<dbReference type="GO" id="GO:0005886">
    <property type="term" value="C:plasma membrane"/>
    <property type="evidence" value="ECO:0007669"/>
    <property type="project" value="Ensembl"/>
</dbReference>
<dbReference type="GO" id="GO:0033017">
    <property type="term" value="C:sarcoplasmic reticulum membrane"/>
    <property type="evidence" value="ECO:0007669"/>
    <property type="project" value="UniProtKB-SubCell"/>
</dbReference>
<dbReference type="GO" id="GO:0046872">
    <property type="term" value="F:metal ion binding"/>
    <property type="evidence" value="ECO:0007669"/>
    <property type="project" value="UniProtKB-KW"/>
</dbReference>
<dbReference type="GO" id="GO:0062101">
    <property type="term" value="F:peptidyl-aspartic acid 3-dioxygenase activity"/>
    <property type="evidence" value="ECO:0000250"/>
    <property type="project" value="MGI"/>
</dbReference>
<dbReference type="GO" id="GO:0008283">
    <property type="term" value="P:cell population proliferation"/>
    <property type="evidence" value="ECO:0000316"/>
    <property type="project" value="MGI"/>
</dbReference>
<dbReference type="GO" id="GO:0060325">
    <property type="term" value="P:face morphogenesis"/>
    <property type="evidence" value="ECO:0000315"/>
    <property type="project" value="MGI"/>
</dbReference>
<dbReference type="GO" id="GO:0035108">
    <property type="term" value="P:limb morphogenesis"/>
    <property type="evidence" value="ECO:0000315"/>
    <property type="project" value="MGI"/>
</dbReference>
<dbReference type="GO" id="GO:0008285">
    <property type="term" value="P:negative regulation of cell population proliferation"/>
    <property type="evidence" value="ECO:0000316"/>
    <property type="project" value="MGI"/>
</dbReference>
<dbReference type="GO" id="GO:0007389">
    <property type="term" value="P:pattern specification process"/>
    <property type="evidence" value="ECO:0000315"/>
    <property type="project" value="MGI"/>
</dbReference>
<dbReference type="GO" id="GO:0045862">
    <property type="term" value="P:positive regulation of proteolysis"/>
    <property type="evidence" value="ECO:0007669"/>
    <property type="project" value="Ensembl"/>
</dbReference>
<dbReference type="GO" id="GO:1901879">
    <property type="term" value="P:regulation of protein depolymerization"/>
    <property type="evidence" value="ECO:0000314"/>
    <property type="project" value="BHF-UCL"/>
</dbReference>
<dbReference type="GO" id="GO:0031647">
    <property type="term" value="P:regulation of protein stability"/>
    <property type="evidence" value="ECO:0000314"/>
    <property type="project" value="BHF-UCL"/>
</dbReference>
<dbReference type="GO" id="GO:0060021">
    <property type="term" value="P:roof of mouth development"/>
    <property type="evidence" value="ECO:0000315"/>
    <property type="project" value="MGI"/>
</dbReference>
<dbReference type="FunFam" id="1.25.40.10:FF:000151">
    <property type="entry name" value="Aspartyl/asparaginyl beta-hydroxylase"/>
    <property type="match status" value="1"/>
</dbReference>
<dbReference type="FunFam" id="1.25.40.10:FF:000154">
    <property type="entry name" value="Aspartyl/asparaginyl beta-hydroxylase"/>
    <property type="match status" value="1"/>
</dbReference>
<dbReference type="FunFam" id="2.60.120.330:FF:000004">
    <property type="entry name" value="aspartyl/asparaginyl beta-hydroxylase isoform X2"/>
    <property type="match status" value="1"/>
</dbReference>
<dbReference type="Gene3D" id="2.60.120.330">
    <property type="entry name" value="B-lactam Antibiotic, Isopenicillin N Synthase, Chain"/>
    <property type="match status" value="1"/>
</dbReference>
<dbReference type="Gene3D" id="1.25.40.10">
    <property type="entry name" value="Tetratricopeptide repeat domain"/>
    <property type="match status" value="2"/>
</dbReference>
<dbReference type="InterPro" id="IPR007943">
    <property type="entry name" value="Asp-B-hydro/Triadin_dom"/>
</dbReference>
<dbReference type="InterPro" id="IPR007803">
    <property type="entry name" value="Asp/Arg/Pro-Hydrxlase"/>
</dbReference>
<dbReference type="InterPro" id="IPR039038">
    <property type="entry name" value="ASPH"/>
</dbReference>
<dbReference type="InterPro" id="IPR027443">
    <property type="entry name" value="IPNS-like_sf"/>
</dbReference>
<dbReference type="InterPro" id="IPR011990">
    <property type="entry name" value="TPR-like_helical_dom_sf"/>
</dbReference>
<dbReference type="InterPro" id="IPR019734">
    <property type="entry name" value="TPR_rpt"/>
</dbReference>
<dbReference type="PANTHER" id="PTHR12366">
    <property type="entry name" value="ASPARTYL/ASPARAGINYL BETA-HYDROXYLASE"/>
    <property type="match status" value="1"/>
</dbReference>
<dbReference type="PANTHER" id="PTHR12366:SF33">
    <property type="entry name" value="ASPARTYL_ASPARAGINYL BETA-HYDROXYLASE"/>
    <property type="match status" value="1"/>
</dbReference>
<dbReference type="Pfam" id="PF05279">
    <property type="entry name" value="Asp-B-Hydro_N"/>
    <property type="match status" value="1"/>
</dbReference>
<dbReference type="Pfam" id="PF05118">
    <property type="entry name" value="Asp_Arg_Hydrox"/>
    <property type="match status" value="1"/>
</dbReference>
<dbReference type="Pfam" id="PF13432">
    <property type="entry name" value="TPR_16"/>
    <property type="match status" value="1"/>
</dbReference>
<dbReference type="Pfam" id="PF13181">
    <property type="entry name" value="TPR_8"/>
    <property type="match status" value="1"/>
</dbReference>
<dbReference type="SMART" id="SM00028">
    <property type="entry name" value="TPR"/>
    <property type="match status" value="2"/>
</dbReference>
<dbReference type="SUPFAM" id="SSF51197">
    <property type="entry name" value="Clavaminate synthase-like"/>
    <property type="match status" value="1"/>
</dbReference>
<dbReference type="SUPFAM" id="SSF48452">
    <property type="entry name" value="TPR-like"/>
    <property type="match status" value="1"/>
</dbReference>
<dbReference type="PROSITE" id="PS50005">
    <property type="entry name" value="TPR"/>
    <property type="match status" value="2"/>
</dbReference>
<dbReference type="PROSITE" id="PS50293">
    <property type="entry name" value="TPR_REGION"/>
    <property type="match status" value="1"/>
</dbReference>
<comment type="function">
    <molecule>Isoform 1</molecule>
    <text evidence="6">Specifically hydroxylates an Asp or Asn residue in certain epidermal growth factor-like (EGF) domains of a number of proteins.</text>
</comment>
<comment type="catalytic activity">
    <reaction evidence="6">
        <text>L-aspartyl-[protein] + 2-oxoglutarate + O2 = 3-hydroxy-L-aspartyl-[protein] + succinate + CO2</text>
        <dbReference type="Rhea" id="RHEA:11508"/>
        <dbReference type="Rhea" id="RHEA-COMP:9867"/>
        <dbReference type="Rhea" id="RHEA-COMP:14951"/>
        <dbReference type="ChEBI" id="CHEBI:15379"/>
        <dbReference type="ChEBI" id="CHEBI:16526"/>
        <dbReference type="ChEBI" id="CHEBI:16810"/>
        <dbReference type="ChEBI" id="CHEBI:17427"/>
        <dbReference type="ChEBI" id="CHEBI:29961"/>
        <dbReference type="ChEBI" id="CHEBI:30031"/>
        <dbReference type="EC" id="1.14.11.16"/>
    </reaction>
</comment>
<comment type="cofactor">
    <cofactor evidence="1">
        <name>Fe cation</name>
        <dbReference type="ChEBI" id="CHEBI:24875"/>
    </cofactor>
</comment>
<comment type="subunit">
    <text evidence="1 2">Monomer. Isoform 2 interacts with CASQ2.</text>
</comment>
<comment type="subcellular location">
    <molecule>Isoform 1</molecule>
    <subcellularLocation>
        <location evidence="2">Endoplasmic reticulum membrane</location>
        <topology evidence="2">Single-pass type II membrane protein</topology>
    </subcellularLocation>
</comment>
<comment type="subcellular location">
    <molecule>Isoform 2</molecule>
    <subcellularLocation>
        <location evidence="9">Sarcoplasmic reticulum membrane</location>
        <topology evidence="10">Single-pass type II membrane protein</topology>
    </subcellularLocation>
</comment>
<comment type="alternative products">
    <event type="alternative splicing"/>
    <isoform>
        <id>Q8BSY0-1</id>
        <name>1</name>
        <sequence type="displayed"/>
    </isoform>
    <isoform>
        <id>Q8BSY0-2</id>
        <name>2</name>
        <name>Junctin</name>
        <sequence type="described" ref="VSP_056792 VSP_056793 VSP_056794"/>
    </isoform>
    <isoform>
        <id>Q8BSY0-3</id>
        <name>3</name>
        <sequence type="described" ref="VSP_060973 VSP_060974 VSP_060975"/>
    </isoform>
</comment>
<comment type="tissue specificity">
    <text evidence="5 6 9">Isoform 1 is detected in heart, liver and ovary (at protein level). Detected in heart ventricle. Isoform 1 is widely expressed. Isoform 2 is detected in heart and skeletal muscle.</text>
</comment>
<comment type="developmental stage">
    <text evidence="8">Strongly expressed in the snout, limbs and eye of 11.5 dpc and 12 dpc. Strong localization of the protein in the lens of the developing eye at all three stages.</text>
</comment>
<comment type="disruption phenotype">
    <text evidence="6 7">Selective disruption of isoform 1 abolishes liver aspartyl beta-hydroxylase activity, but does not affect the expression of isoform 2. Mice lacking isoform 1 have normal blood chemistry, do not present blood coagulation defects and appear more or less normal, except for shorter snouts, mild defects of the palate ridges, syndactily due to fusion of soft tissues and reduced litter size from mutant females, while male fertility appears normal. Mice lacking isoform 2 show no visible phenotype.</text>
</comment>
<comment type="similarity">
    <text evidence="11">Belongs to the aspartyl/asparaginyl beta-hydroxylase family.</text>
</comment>
<feature type="chain" id="PRO_0000254161" description="Aspartyl/asparaginyl beta-hydroxylase">
    <location>
        <begin position="1"/>
        <end position="741"/>
    </location>
</feature>
<feature type="topological domain" description="Cytoplasmic" evidence="3">
    <location>
        <begin position="1"/>
        <end position="62"/>
    </location>
</feature>
<feature type="transmembrane region" description="Helical; Signal-anchor for type II membrane protein" evidence="3">
    <location>
        <begin position="63"/>
        <end position="83"/>
    </location>
</feature>
<feature type="topological domain" description="Lumenal" evidence="3">
    <location>
        <begin position="84"/>
        <end position="741"/>
    </location>
</feature>
<feature type="repeat" description="TPR 1">
    <location>
        <begin position="324"/>
        <end position="357"/>
    </location>
</feature>
<feature type="repeat" description="TPR 2">
    <location>
        <begin position="365"/>
        <end position="398"/>
    </location>
</feature>
<feature type="repeat" description="TPR 3">
    <location>
        <begin position="437"/>
        <end position="470"/>
    </location>
</feature>
<feature type="repeat" description="TPR 4">
    <location>
        <begin position="472"/>
        <end position="504"/>
    </location>
</feature>
<feature type="repeat" description="TPR 5">
    <location>
        <begin position="508"/>
        <end position="540"/>
    </location>
</feature>
<feature type="region of interest" description="Disordered" evidence="4">
    <location>
        <begin position="1"/>
        <end position="54"/>
    </location>
</feature>
<feature type="region of interest" description="Disordered" evidence="4">
    <location>
        <begin position="120"/>
        <end position="141"/>
    </location>
</feature>
<feature type="region of interest" description="Disordered" evidence="4">
    <location>
        <begin position="222"/>
        <end position="244"/>
    </location>
</feature>
<feature type="compositionally biased region" description="Gly residues" evidence="4">
    <location>
        <begin position="8"/>
        <end position="25"/>
    </location>
</feature>
<feature type="compositionally biased region" description="Low complexity" evidence="4">
    <location>
        <begin position="26"/>
        <end position="40"/>
    </location>
</feature>
<feature type="compositionally biased region" description="Acidic residues" evidence="4">
    <location>
        <begin position="231"/>
        <end position="242"/>
    </location>
</feature>
<feature type="binding site" evidence="1">
    <location>
        <position position="100"/>
    </location>
    <ligand>
        <name>Ca(2+)</name>
        <dbReference type="ChEBI" id="CHEBI:29108"/>
    </ligand>
</feature>
<feature type="binding site" evidence="1">
    <location>
        <position position="102"/>
    </location>
    <ligand>
        <name>Ca(2+)</name>
        <dbReference type="ChEBI" id="CHEBI:29108"/>
    </ligand>
</feature>
<feature type="binding site" evidence="1">
    <location>
        <position position="104"/>
    </location>
    <ligand>
        <name>Ca(2+)</name>
        <dbReference type="ChEBI" id="CHEBI:29108"/>
    </ligand>
</feature>
<feature type="binding site" evidence="1">
    <location>
        <position position="106"/>
    </location>
    <ligand>
        <name>Ca(2+)</name>
        <dbReference type="ChEBI" id="CHEBI:29108"/>
    </ligand>
</feature>
<feature type="binding site" evidence="1">
    <location>
        <position position="111"/>
    </location>
    <ligand>
        <name>Ca(2+)</name>
        <dbReference type="ChEBI" id="CHEBI:29108"/>
    </ligand>
</feature>
<feature type="binding site" evidence="1">
    <location>
        <position position="608"/>
    </location>
    <ligand>
        <name>2-oxoglutarate</name>
        <dbReference type="ChEBI" id="CHEBI:16810"/>
    </ligand>
</feature>
<feature type="binding site" evidence="1">
    <location>
        <position position="651"/>
    </location>
    <ligand>
        <name>2-oxoglutarate</name>
        <dbReference type="ChEBI" id="CHEBI:16810"/>
    </ligand>
</feature>
<feature type="binding site" evidence="1">
    <location>
        <position position="662"/>
    </location>
    <ligand>
        <name>Fe cation</name>
        <dbReference type="ChEBI" id="CHEBI:24875"/>
    </ligand>
</feature>
<feature type="binding site" evidence="1">
    <location>
        <begin position="671"/>
        <end position="673"/>
    </location>
    <ligand>
        <name>2-oxoglutarate</name>
        <dbReference type="ChEBI" id="CHEBI:16810"/>
    </ligand>
</feature>
<feature type="binding site" evidence="1">
    <location>
        <position position="708"/>
    </location>
    <ligand>
        <name>Fe cation</name>
        <dbReference type="ChEBI" id="CHEBI:24875"/>
    </ligand>
</feature>
<feature type="binding site" evidence="1">
    <location>
        <position position="718"/>
    </location>
    <ligand>
        <name>2-oxoglutarate</name>
        <dbReference type="ChEBI" id="CHEBI:16810"/>
    </ligand>
</feature>
<feature type="modified residue" description="Phosphoserine" evidence="1">
    <location>
        <position position="15"/>
    </location>
</feature>
<feature type="glycosylation site" description="N-linked (GlcNAc...) asparagine" evidence="3">
    <location>
        <position position="453"/>
    </location>
</feature>
<feature type="glycosylation site" description="N-linked (GlcNAc...) asparagine" evidence="3">
    <location>
        <position position="689"/>
    </location>
</feature>
<feature type="disulfide bond" evidence="1">
    <location>
        <begin position="624"/>
        <end position="631"/>
    </location>
</feature>
<feature type="splice variant" id="VSP_056792" description="In isoform 2." evidence="11">
    <original>MAPRKNAKGGGGNSSSSGSGSGSGSGSPSTGSSGSSSSPGARR</original>
    <variation>MAEDK</variation>
    <location>
        <begin position="1"/>
        <end position="43"/>
    </location>
</feature>
<feature type="splice variant" id="VSP_060973" description="In isoform 3.">
    <original>L</original>
    <variation>LAKAKDFRYNLSEVLQ</variation>
    <location>
        <position position="93"/>
    </location>
</feature>
<feature type="splice variant" id="VSP_056793" description="In isoform 2." evidence="11">
    <original>GLKERSPSERTFPPEEEAETHAELEEQAPEGADIQNVEDEVKEQIQSLLQESVHTDHDLEADGLAGEPQPEVEDFLTVTDSDDRFEDLEPGTVHEEIEDTYHVEDTASQNHPNDMEEMTNEQENSDPSE</original>
    <variation>EGPGGLAKRKTKAKAKEPIKEELKKERGKAVPSKNEERRQGKKEQEDRGKGRKKPDSDTSQKASAAGKRDRDKEKASSDKSSKSKESWKKAVETKAVSSKVAARDKDRRGRSSSGHAHVSKENGQKRKN</variation>
    <location>
        <begin position="117"/>
        <end position="245"/>
    </location>
</feature>
<feature type="splice variant" id="VSP_060974" description="In isoform 3.">
    <original>KERSPSERTFPPEEEAETHAELEEQAPEGADIQNVEDEVKEQIQSLLQESVHTDHDLEADGLAGEPQPEVEDFLTVTDS</original>
    <variation>TKDGSNENIDSLEEVLTILAEESSDWFYGFLSFLYDIMTPFEMLEEEEEESETADGVDGTSQNEGVQGKTCVILDLHNQ</variation>
    <location>
        <begin position="119"/>
        <end position="197"/>
    </location>
</feature>
<feature type="splice variant" id="VSP_060975" description="In isoform 3.">
    <location>
        <begin position="198"/>
        <end position="741"/>
    </location>
</feature>
<feature type="splice variant" id="VSP_056794" description="In isoform 2." evidence="11">
    <location>
        <begin position="246"/>
        <end position="741"/>
    </location>
</feature>
<feature type="sequence conflict" description="In Ref. 2; AAG40808/AAG40809." evidence="11" ref="2">
    <location>
        <begin position="131"/>
        <end position="132"/>
    </location>
</feature>
<feature type="sequence conflict" description="In Ref. 2; AAG40808/AAG40809." evidence="11" ref="2">
    <original>A</original>
    <variation>E</variation>
    <location>
        <position position="279"/>
    </location>
</feature>
<organism>
    <name type="scientific">Mus musculus</name>
    <name type="common">Mouse</name>
    <dbReference type="NCBI Taxonomy" id="10090"/>
    <lineage>
        <taxon>Eukaryota</taxon>
        <taxon>Metazoa</taxon>
        <taxon>Chordata</taxon>
        <taxon>Craniata</taxon>
        <taxon>Vertebrata</taxon>
        <taxon>Euteleostomi</taxon>
        <taxon>Mammalia</taxon>
        <taxon>Eutheria</taxon>
        <taxon>Euarchontoglires</taxon>
        <taxon>Glires</taxon>
        <taxon>Rodentia</taxon>
        <taxon>Myomorpha</taxon>
        <taxon>Muroidea</taxon>
        <taxon>Muridae</taxon>
        <taxon>Murinae</taxon>
        <taxon>Mus</taxon>
        <taxon>Mus</taxon>
    </lineage>
</organism>
<proteinExistence type="evidence at protein level"/>
<protein>
    <recommendedName>
        <fullName>Aspartyl/asparaginyl beta-hydroxylase</fullName>
        <ecNumber evidence="6">1.14.11.16</ecNumber>
    </recommendedName>
    <alternativeName>
        <fullName>Aspartate beta-hydroxylase</fullName>
        <shortName>ASP beta-hydroxylase</shortName>
    </alternativeName>
    <alternativeName>
        <fullName>Peptide-aspartate beta-dioxygenase</fullName>
    </alternativeName>
</protein>
<keyword id="KW-0025">Alternative splicing</keyword>
<keyword id="KW-0106">Calcium</keyword>
<keyword id="KW-0223">Dioxygenase</keyword>
<keyword id="KW-1015">Disulfide bond</keyword>
<keyword id="KW-0256">Endoplasmic reticulum</keyword>
<keyword id="KW-0325">Glycoprotein</keyword>
<keyword id="KW-0408">Iron</keyword>
<keyword id="KW-0472">Membrane</keyword>
<keyword id="KW-0479">Metal-binding</keyword>
<keyword id="KW-0560">Oxidoreductase</keyword>
<keyword id="KW-0597">Phosphoprotein</keyword>
<keyword id="KW-1185">Reference proteome</keyword>
<keyword id="KW-0677">Repeat</keyword>
<keyword id="KW-0703">Sarcoplasmic reticulum</keyword>
<keyword id="KW-0735">Signal-anchor</keyword>
<keyword id="KW-0802">TPR repeat</keyword>
<keyword id="KW-0812">Transmembrane</keyword>
<keyword id="KW-1133">Transmembrane helix</keyword>
<evidence type="ECO:0000250" key="1">
    <source>
        <dbReference type="UniProtKB" id="Q12797"/>
    </source>
</evidence>
<evidence type="ECO:0000250" key="2">
    <source>
        <dbReference type="UniProtKB" id="Q28056"/>
    </source>
</evidence>
<evidence type="ECO:0000255" key="3"/>
<evidence type="ECO:0000256" key="4">
    <source>
        <dbReference type="SAM" id="MobiDB-lite"/>
    </source>
</evidence>
<evidence type="ECO:0000269" key="5">
    <source>
    </source>
</evidence>
<evidence type="ECO:0000269" key="6">
    <source>
    </source>
</evidence>
<evidence type="ECO:0000269" key="7">
    <source>
    </source>
</evidence>
<evidence type="ECO:0000269" key="8">
    <source>
    </source>
</evidence>
<evidence type="ECO:0000269" key="9">
    <source>
    </source>
</evidence>
<evidence type="ECO:0000303" key="10">
    <source>
    </source>
</evidence>
<evidence type="ECO:0000305" key="11"/>
<reference key="1">
    <citation type="journal article" date="1995" name="J. Biol. Chem.">
        <title>Purification, primary structure, and immunological characterization of the 26-kDa calsequestrin binding protein (junctin) from cardiac junctional sarcoplasmic reticulum.</title>
        <authorList>
            <person name="Jones L.R."/>
            <person name="Zhang L."/>
            <person name="Sanborn K."/>
            <person name="Jorgensen A.O."/>
            <person name="Kelley J."/>
        </authorList>
    </citation>
    <scope>NUCLEOTIDE SEQUENCE [MRNA] (ISOFORM 2)</scope>
    <scope>TISSUE SPECIFICITY</scope>
    <scope>SUBCELLULAR LOCATION</scope>
    <source>
        <tissue>Heart muscle</tissue>
    </source>
</reference>
<reference key="2">
    <citation type="journal article" date="2000" name="J. Biol. Chem.">
        <title>Aspartyl beta -hydroxylase (Asph) and an evolutionarily conserved isoform of Asph missing the catalytic domain share exons with junctin.</title>
        <authorList>
            <person name="Dinchuk J.E."/>
            <person name="Henderson N.L."/>
            <person name="Burn T.C."/>
            <person name="Huber R."/>
            <person name="Ho S.P."/>
            <person name="Link J."/>
            <person name="O'Neil K.T."/>
            <person name="Focht R.J."/>
            <person name="Scully M.S."/>
            <person name="Hollis J.M."/>
            <person name="Hollis G.F."/>
            <person name="Friedman P.A."/>
        </authorList>
    </citation>
    <scope>NUCLEOTIDE SEQUENCE [MRNA] (ISOFORMS 1 AND 2)</scope>
    <scope>ALTERNATIVE SPLICING</scope>
    <scope>TISSUE SPECIFICITY</scope>
    <source>
        <strain>BALB/cJ</strain>
        <tissue>Liver</tissue>
    </source>
</reference>
<reference key="3">
    <citation type="submission" date="2000-01" db="EMBL/GenBank/DDBJ databases">
        <title>Mouse junctin-1 mRNA.</title>
        <authorList>
            <person name="Hong C."/>
            <person name="Kim D.H."/>
        </authorList>
    </citation>
    <scope>NUCLEOTIDE SEQUENCE [MRNA] (ISOFORM 2)</scope>
    <source>
        <strain>BALB/cJ</strain>
        <tissue>Heart</tissue>
    </source>
</reference>
<reference key="4">
    <citation type="journal article" date="2005" name="Science">
        <title>The transcriptional landscape of the mammalian genome.</title>
        <authorList>
            <person name="Carninci P."/>
            <person name="Kasukawa T."/>
            <person name="Katayama S."/>
            <person name="Gough J."/>
            <person name="Frith M.C."/>
            <person name="Maeda N."/>
            <person name="Oyama R."/>
            <person name="Ravasi T."/>
            <person name="Lenhard B."/>
            <person name="Wells C."/>
            <person name="Kodzius R."/>
            <person name="Shimokawa K."/>
            <person name="Bajic V.B."/>
            <person name="Brenner S.E."/>
            <person name="Batalov S."/>
            <person name="Forrest A.R."/>
            <person name="Zavolan M."/>
            <person name="Davis M.J."/>
            <person name="Wilming L.G."/>
            <person name="Aidinis V."/>
            <person name="Allen J.E."/>
            <person name="Ambesi-Impiombato A."/>
            <person name="Apweiler R."/>
            <person name="Aturaliya R.N."/>
            <person name="Bailey T.L."/>
            <person name="Bansal M."/>
            <person name="Baxter L."/>
            <person name="Beisel K.W."/>
            <person name="Bersano T."/>
            <person name="Bono H."/>
            <person name="Chalk A.M."/>
            <person name="Chiu K.P."/>
            <person name="Choudhary V."/>
            <person name="Christoffels A."/>
            <person name="Clutterbuck D.R."/>
            <person name="Crowe M.L."/>
            <person name="Dalla E."/>
            <person name="Dalrymple B.P."/>
            <person name="de Bono B."/>
            <person name="Della Gatta G."/>
            <person name="di Bernardo D."/>
            <person name="Down T."/>
            <person name="Engstrom P."/>
            <person name="Fagiolini M."/>
            <person name="Faulkner G."/>
            <person name="Fletcher C.F."/>
            <person name="Fukushima T."/>
            <person name="Furuno M."/>
            <person name="Futaki S."/>
            <person name="Gariboldi M."/>
            <person name="Georgii-Hemming P."/>
            <person name="Gingeras T.R."/>
            <person name="Gojobori T."/>
            <person name="Green R.E."/>
            <person name="Gustincich S."/>
            <person name="Harbers M."/>
            <person name="Hayashi Y."/>
            <person name="Hensch T.K."/>
            <person name="Hirokawa N."/>
            <person name="Hill D."/>
            <person name="Huminiecki L."/>
            <person name="Iacono M."/>
            <person name="Ikeo K."/>
            <person name="Iwama A."/>
            <person name="Ishikawa T."/>
            <person name="Jakt M."/>
            <person name="Kanapin A."/>
            <person name="Katoh M."/>
            <person name="Kawasawa Y."/>
            <person name="Kelso J."/>
            <person name="Kitamura H."/>
            <person name="Kitano H."/>
            <person name="Kollias G."/>
            <person name="Krishnan S.P."/>
            <person name="Kruger A."/>
            <person name="Kummerfeld S.K."/>
            <person name="Kurochkin I.V."/>
            <person name="Lareau L.F."/>
            <person name="Lazarevic D."/>
            <person name="Lipovich L."/>
            <person name="Liu J."/>
            <person name="Liuni S."/>
            <person name="McWilliam S."/>
            <person name="Madan Babu M."/>
            <person name="Madera M."/>
            <person name="Marchionni L."/>
            <person name="Matsuda H."/>
            <person name="Matsuzawa S."/>
            <person name="Miki H."/>
            <person name="Mignone F."/>
            <person name="Miyake S."/>
            <person name="Morris K."/>
            <person name="Mottagui-Tabar S."/>
            <person name="Mulder N."/>
            <person name="Nakano N."/>
            <person name="Nakauchi H."/>
            <person name="Ng P."/>
            <person name="Nilsson R."/>
            <person name="Nishiguchi S."/>
            <person name="Nishikawa S."/>
            <person name="Nori F."/>
            <person name="Ohara O."/>
            <person name="Okazaki Y."/>
            <person name="Orlando V."/>
            <person name="Pang K.C."/>
            <person name="Pavan W.J."/>
            <person name="Pavesi G."/>
            <person name="Pesole G."/>
            <person name="Petrovsky N."/>
            <person name="Piazza S."/>
            <person name="Reed J."/>
            <person name="Reid J.F."/>
            <person name="Ring B.Z."/>
            <person name="Ringwald M."/>
            <person name="Rost B."/>
            <person name="Ruan Y."/>
            <person name="Salzberg S.L."/>
            <person name="Sandelin A."/>
            <person name="Schneider C."/>
            <person name="Schoenbach C."/>
            <person name="Sekiguchi K."/>
            <person name="Semple C.A."/>
            <person name="Seno S."/>
            <person name="Sessa L."/>
            <person name="Sheng Y."/>
            <person name="Shibata Y."/>
            <person name="Shimada H."/>
            <person name="Shimada K."/>
            <person name="Silva D."/>
            <person name="Sinclair B."/>
            <person name="Sperling S."/>
            <person name="Stupka E."/>
            <person name="Sugiura K."/>
            <person name="Sultana R."/>
            <person name="Takenaka Y."/>
            <person name="Taki K."/>
            <person name="Tammoja K."/>
            <person name="Tan S.L."/>
            <person name="Tang S."/>
            <person name="Taylor M.S."/>
            <person name="Tegner J."/>
            <person name="Teichmann S.A."/>
            <person name="Ueda H.R."/>
            <person name="van Nimwegen E."/>
            <person name="Verardo R."/>
            <person name="Wei C.L."/>
            <person name="Yagi K."/>
            <person name="Yamanishi H."/>
            <person name="Zabarovsky E."/>
            <person name="Zhu S."/>
            <person name="Zimmer A."/>
            <person name="Hide W."/>
            <person name="Bult C."/>
            <person name="Grimmond S.M."/>
            <person name="Teasdale R.D."/>
            <person name="Liu E.T."/>
            <person name="Brusic V."/>
            <person name="Quackenbush J."/>
            <person name="Wahlestedt C."/>
            <person name="Mattick J.S."/>
            <person name="Hume D.A."/>
            <person name="Kai C."/>
            <person name="Sasaki D."/>
            <person name="Tomaru Y."/>
            <person name="Fukuda S."/>
            <person name="Kanamori-Katayama M."/>
            <person name="Suzuki M."/>
            <person name="Aoki J."/>
            <person name="Arakawa T."/>
            <person name="Iida J."/>
            <person name="Imamura K."/>
            <person name="Itoh M."/>
            <person name="Kato T."/>
            <person name="Kawaji H."/>
            <person name="Kawagashira N."/>
            <person name="Kawashima T."/>
            <person name="Kojima M."/>
            <person name="Kondo S."/>
            <person name="Konno H."/>
            <person name="Nakano K."/>
            <person name="Ninomiya N."/>
            <person name="Nishio T."/>
            <person name="Okada M."/>
            <person name="Plessy C."/>
            <person name="Shibata K."/>
            <person name="Shiraki T."/>
            <person name="Suzuki S."/>
            <person name="Tagami M."/>
            <person name="Waki K."/>
            <person name="Watahiki A."/>
            <person name="Okamura-Oho Y."/>
            <person name="Suzuki H."/>
            <person name="Kawai J."/>
            <person name="Hayashizaki Y."/>
        </authorList>
    </citation>
    <scope>NUCLEOTIDE SEQUENCE [LARGE SCALE MRNA] (ISOFORM 1)</scope>
    <source>
        <strain>C57BL/6J</strain>
    </source>
</reference>
<reference key="5">
    <citation type="journal article" date="2009" name="PLoS Biol.">
        <title>Lineage-specific biology revealed by a finished genome assembly of the mouse.</title>
        <authorList>
            <person name="Church D.M."/>
            <person name="Goodstadt L."/>
            <person name="Hillier L.W."/>
            <person name="Zody M.C."/>
            <person name="Goldstein S."/>
            <person name="She X."/>
            <person name="Bult C.J."/>
            <person name="Agarwala R."/>
            <person name="Cherry J.L."/>
            <person name="DiCuccio M."/>
            <person name="Hlavina W."/>
            <person name="Kapustin Y."/>
            <person name="Meric P."/>
            <person name="Maglott D."/>
            <person name="Birtle Z."/>
            <person name="Marques A.C."/>
            <person name="Graves T."/>
            <person name="Zhou S."/>
            <person name="Teague B."/>
            <person name="Potamousis K."/>
            <person name="Churas C."/>
            <person name="Place M."/>
            <person name="Herschleb J."/>
            <person name="Runnheim R."/>
            <person name="Forrest D."/>
            <person name="Amos-Landgraf J."/>
            <person name="Schwartz D.C."/>
            <person name="Cheng Z."/>
            <person name="Lindblad-Toh K."/>
            <person name="Eichler E.E."/>
            <person name="Ponting C.P."/>
        </authorList>
    </citation>
    <scope>NUCLEOTIDE SEQUENCE [LARGE SCALE GENOMIC DNA]</scope>
    <source>
        <strain>C57BL/6J</strain>
        <tissue>Brain</tissue>
    </source>
</reference>
<reference key="6">
    <citation type="journal article" date="2004" name="Genome Res.">
        <title>The status, quality, and expansion of the NIH full-length cDNA project: the Mammalian Gene Collection (MGC).</title>
        <authorList>
            <consortium name="The MGC Project Team"/>
        </authorList>
    </citation>
    <scope>NUCLEOTIDE SEQUENCE [LARGE SCALE MRNA] (ISOFORMS 2 AND 3)</scope>
</reference>
<reference key="7">
    <citation type="journal article" date="2002" name="J. Biol. Chem.">
        <title>Absence of post-translational aspartyl beta-hydroxylation of epidermal growth factor domains in mice leads to developmental defects and an increased incidence of intestinal neoplasia.</title>
        <authorList>
            <person name="Dinchuk J.E."/>
            <person name="Focht R.J."/>
            <person name="Kelley J.A."/>
            <person name="Henderson N.L."/>
            <person name="Zolotarjova N.I."/>
            <person name="Wynn R."/>
            <person name="Neff N.T."/>
            <person name="Link J."/>
            <person name="Huber R.M."/>
            <person name="Burn T.C."/>
            <person name="Rupar M.J."/>
            <person name="Cunningham M.R."/>
            <person name="Selling B.H."/>
            <person name="Ma J."/>
            <person name="Stern A.A."/>
            <person name="Hollis G.F."/>
            <person name="Stein R.B."/>
            <person name="Friedman P.A."/>
        </authorList>
    </citation>
    <scope>DISRUPTION PHENOTYPE</scope>
    <scope>FUNCTION</scope>
    <scope>CATALYTIC ACTIVITY</scope>
    <scope>TISSUE SPECIFICITY</scope>
</reference>
<reference key="8">
    <citation type="journal article" date="2010" name="Cell">
        <title>A tissue-specific atlas of mouse protein phosphorylation and expression.</title>
        <authorList>
            <person name="Huttlin E.L."/>
            <person name="Jedrychowski M.P."/>
            <person name="Elias J.E."/>
            <person name="Goswami T."/>
            <person name="Rad R."/>
            <person name="Beausoleil S.A."/>
            <person name="Villen J."/>
            <person name="Haas W."/>
            <person name="Sowa M.E."/>
            <person name="Gygi S.P."/>
        </authorList>
    </citation>
    <scope>IDENTIFICATION BY MASS SPECTROMETRY [LARGE SCALE ANALYSIS]</scope>
    <source>
        <tissue>Brain</tissue>
        <tissue>Brown adipose tissue</tissue>
        <tissue>Heart</tissue>
        <tissue>Kidney</tissue>
        <tissue>Liver</tissue>
        <tissue>Lung</tissue>
        <tissue>Pancreas</tissue>
        <tissue>Spleen</tissue>
        <tissue>Testis</tissue>
    </source>
</reference>
<reference key="9">
    <citation type="journal article" date="2012" name="PLoS ONE">
        <title>Triadin/junctin double null mouse reveals a differential role for triadin and junctin in anchoring CASQ to the jSR and regulating Ca(2+) homeostasis.</title>
        <authorList>
            <person name="Boncompagni S."/>
            <person name="Thomas M."/>
            <person name="Lopez J.R."/>
            <person name="Allen P.D."/>
            <person name="Yuan Q."/>
            <person name="Kranias E.G."/>
            <person name="Franzini-Armstrong C."/>
            <person name="Perez C.F."/>
        </authorList>
    </citation>
    <scope>DISRUPTION PHENOTYPE</scope>
</reference>
<reference key="10">
    <citation type="journal article" date="2014" name="Am. J. Hum. Genet.">
        <title>Mutations in ASPH cause facial dysmorphism, lens dislocation, anterior-segment abnormalities, and spontaneous filtering blebs, or Traboulsi syndrome.</title>
        <authorList>
            <person name="Patel N."/>
            <person name="Khan A.O."/>
            <person name="Mansour A."/>
            <person name="Mohamed J.Y."/>
            <person name="Al-Assiri A."/>
            <person name="Haddad R."/>
            <person name="Jia X."/>
            <person name="Xiong Y."/>
            <person name="Megarbane A."/>
            <person name="Traboulsi E.I."/>
            <person name="Alkuraya F.S."/>
        </authorList>
    </citation>
    <scope>DEVELOPMENTAL STAGE</scope>
</reference>
<name>ASPH_MOUSE</name>
<sequence>MAPRKNAKGGGGNSSSSGSGSGSGSGSPSTGSSGSSSSPGARREAKHGGHKNGRRGGISGGSFFTWFMVIALLGVWTSVAVVWFDLVDYEEVLGKLGVYDADGDGDFDVDDAKVLLGLKERSPSERTFPPEEEAETHAELEEQAPEGADIQNVEDEVKEQIQSLLQESVHTDHDLEADGLAGEPQPEVEDFLTVTDSDDRFEDLEPGTVHEEIEDTYHVEDTASQNHPNDMEEMTNEQENSDPSEAVTDAGVLLPHAEEVRHQDYDEPVYEPSEHEGVAISDNTIDDSSIISEEINVASVEEQQDTPPVKKKKPKLLNKFDKTIKAELDAAEKLRKRGKIEEAVNAFEELVRKYPQSPRARYGKAQCEDDLAEKQRSNEVLRRAIETYQEAADLPDAPTDLVKLSLKRRSERQQFLGHMRGSLLTLQRLVQLFPSDTTLKNDLGVGYLLLGDNDSAKKVYEEVLNVTPNDGFAKVHYGFILKAQNKISESIPYLKEGIESGDPGTDDGRFYFHLGDAMQRVGNKEAYKWYELGHKRGHFASVWQRSLYNVNGLKAQPWWTPRETGYTELVKSLERNWKLIRDEGLMVMDKAKGLFLPEDENLREKGDWSQFTLWQQGRKNENACKGAPKTCALLEKFSETTGCRRGQIKYSIMHPGTHVWPHTGPTNCRLRMHLGLVIPKEGCKIRCANETRTWEEGKVLIFDDSFEHEVWQDASSFRLIFIVDVWHPELTPQQRRSLPAI</sequence>